<dbReference type="EMBL" id="AF473865">
    <property type="protein sequence ID" value="AAN16988.1"/>
    <property type="molecule type" value="Genomic_RNA"/>
</dbReference>
<dbReference type="SMR" id="Q8B0H6"/>
<dbReference type="GlyCosmos" id="Q8B0H6">
    <property type="glycosylation" value="2 sites, No reported glycans"/>
</dbReference>
<dbReference type="Proteomes" id="UP000007625">
    <property type="component" value="Genome"/>
</dbReference>
<dbReference type="GO" id="GO:0033644">
    <property type="term" value="C:host cell membrane"/>
    <property type="evidence" value="ECO:0007669"/>
    <property type="project" value="UniProtKB-SubCell"/>
</dbReference>
<dbReference type="GO" id="GO:0016020">
    <property type="term" value="C:membrane"/>
    <property type="evidence" value="ECO:0007669"/>
    <property type="project" value="UniProtKB-KW"/>
</dbReference>
<dbReference type="GO" id="GO:0019031">
    <property type="term" value="C:viral envelope"/>
    <property type="evidence" value="ECO:0007669"/>
    <property type="project" value="UniProtKB-KW"/>
</dbReference>
<dbReference type="GO" id="GO:0055036">
    <property type="term" value="C:virion membrane"/>
    <property type="evidence" value="ECO:0007669"/>
    <property type="project" value="UniProtKB-SubCell"/>
</dbReference>
<dbReference type="GO" id="GO:0075512">
    <property type="term" value="P:clathrin-dependent endocytosis of virus by host cell"/>
    <property type="evidence" value="ECO:0007669"/>
    <property type="project" value="UniProtKB-KW"/>
</dbReference>
<dbReference type="GO" id="GO:0098670">
    <property type="term" value="P:entry receptor-mediated virion attachment to host cell"/>
    <property type="evidence" value="ECO:0007669"/>
    <property type="project" value="UniProtKB-KW"/>
</dbReference>
<dbReference type="GO" id="GO:0039654">
    <property type="term" value="P:fusion of virus membrane with host endosome membrane"/>
    <property type="evidence" value="ECO:0007669"/>
    <property type="project" value="UniProtKB-KW"/>
</dbReference>
<dbReference type="Gene3D" id="2.30.29.130">
    <property type="match status" value="2"/>
</dbReference>
<dbReference type="Gene3D" id="2.30.30.640">
    <property type="match status" value="2"/>
</dbReference>
<dbReference type="InterPro" id="IPR055447">
    <property type="entry name" value="Rhabdo_glycop_CD"/>
</dbReference>
<dbReference type="InterPro" id="IPR001903">
    <property type="entry name" value="Rhabdo_glycop_FD"/>
</dbReference>
<dbReference type="Pfam" id="PF24833">
    <property type="entry name" value="Rhabdo_glycop_CD"/>
    <property type="match status" value="1"/>
</dbReference>
<dbReference type="Pfam" id="PF00974">
    <property type="entry name" value="Rhabdo_glycop_FD"/>
    <property type="match status" value="1"/>
</dbReference>
<dbReference type="SUPFAM" id="SSF161008">
    <property type="entry name" value="Viral glycoprotein ectodomain-like"/>
    <property type="match status" value="1"/>
</dbReference>
<sequence length="511" mass="57420">MKCLLCLAFLFIGVNCKFTIVFPHNQKGNWKNVPSNYHYCPSSSDLNWHNDLIGTALQVKMPKSHKAIQADGWMCHASKWITTCDFRWYGPKYITHSIQSFTPSVEQCKESIEQTKQGTWLNPGFPPQSCGYATVTDAEAVIVQVTPHHVLVDEYTGEWVDSQFINGKCSNDICLTVHNSTTWHSDYKVKGLCDSNLISMDITFFSEDGELSSLGKAGTGFRSNYFAYETGDKACKMQYCKHWGVRLPSGVWFEMADKDLFAAAKFPECPEGSSISAPSQTSVDVSLIQDVERILDYSLCQETWSKIRAGLPISPVDLSYLAPKNPGTGPAFTIINGTLKYFETRYIRVDIAAPILSRMVGMISGTNTERELWEDWAPYEDVEIGPNGVLRTSSGYKFPLYMIGHGMLDSDLHLSSKVQVFEHPHIQDAASQLPDDETLFFGDTGLSKNPIELVEGWFSGWKSSIASFFFIIGLIIGLFLVLRVGIYLCIKLKHTRKRKIYADIEMNRLGK</sequence>
<gene>
    <name type="primary">G</name>
</gene>
<proteinExistence type="evidence at protein level"/>
<organismHost>
    <name type="scientific">Aedes</name>
    <dbReference type="NCBI Taxonomy" id="7158"/>
</organismHost>
<organismHost>
    <name type="scientific">Bos taurus</name>
    <name type="common">Bovine</name>
    <dbReference type="NCBI Taxonomy" id="9913"/>
</organismHost>
<organismHost>
    <name type="scientific">Culicoides</name>
    <dbReference type="NCBI Taxonomy" id="58271"/>
</organismHost>
<organismHost>
    <name type="scientific">Equus asinus</name>
    <name type="common">Donkey</name>
    <name type="synonym">Equus africanus asinus</name>
    <dbReference type="NCBI Taxonomy" id="9793"/>
</organismHost>
<organismHost>
    <name type="scientific">Equus caballus</name>
    <name type="common">Horse</name>
    <dbReference type="NCBI Taxonomy" id="9796"/>
</organismHost>
<organismHost>
    <name type="scientific">Homo sapiens</name>
    <name type="common">Human</name>
    <dbReference type="NCBI Taxonomy" id="9606"/>
</organismHost>
<organismHost>
    <name type="scientific">Lutzomyia</name>
    <dbReference type="NCBI Taxonomy" id="252607"/>
</organismHost>
<organismHost>
    <name type="scientific">Musca domestica</name>
    <name type="common">House fly</name>
    <dbReference type="NCBI Taxonomy" id="7370"/>
</organismHost>
<organismHost>
    <name type="scientific">Simuliidae</name>
    <name type="common">black flies</name>
    <dbReference type="NCBI Taxonomy" id="7190"/>
</organismHost>
<organismHost>
    <name type="scientific">Sus scrofa</name>
    <name type="common">Pig</name>
    <dbReference type="NCBI Taxonomy" id="9823"/>
</organismHost>
<keyword id="KW-1165">Clathrin-mediated endocytosis of virus by host</keyword>
<keyword id="KW-1015">Disulfide bond</keyword>
<keyword id="KW-1170">Fusion of virus membrane with host endosomal membrane</keyword>
<keyword id="KW-1168">Fusion of virus membrane with host membrane</keyword>
<keyword id="KW-0325">Glycoprotein</keyword>
<keyword id="KW-1043">Host membrane</keyword>
<keyword id="KW-0945">Host-virus interaction</keyword>
<keyword id="KW-0449">Lipoprotein</keyword>
<keyword id="KW-0472">Membrane</keyword>
<keyword id="KW-0564">Palmitate</keyword>
<keyword id="KW-0732">Signal</keyword>
<keyword id="KW-0812">Transmembrane</keyword>
<keyword id="KW-1133">Transmembrane helix</keyword>
<keyword id="KW-1161">Viral attachment to host cell</keyword>
<keyword id="KW-1234">Viral attachment to host entry receptor</keyword>
<keyword id="KW-0261">Viral envelope protein</keyword>
<keyword id="KW-1162">Viral penetration into host cytoplasm</keyword>
<keyword id="KW-0946">Virion</keyword>
<keyword id="KW-1164">Virus endocytosis by host</keyword>
<keyword id="KW-1160">Virus entry into host cell</keyword>
<feature type="signal peptide" evidence="4">
    <location>
        <begin position="1"/>
        <end position="16"/>
    </location>
</feature>
<feature type="chain" id="PRO_0000287250" description="Glycoprotein">
    <location>
        <begin position="17"/>
        <end position="511"/>
    </location>
</feature>
<feature type="topological domain" description="Virion surface" evidence="4">
    <location>
        <begin position="17"/>
        <end position="467"/>
    </location>
</feature>
<feature type="transmembrane region" description="Helical" evidence="4">
    <location>
        <begin position="468"/>
        <end position="488"/>
    </location>
</feature>
<feature type="topological domain" description="Intravirion" evidence="4">
    <location>
        <begin position="489"/>
        <end position="511"/>
    </location>
</feature>
<feature type="region of interest" description="Trimerization" evidence="3">
    <location>
        <begin position="18"/>
        <end position="35"/>
    </location>
</feature>
<feature type="region of interest" description="Fusion peptide" evidence="3">
    <location>
        <begin position="53"/>
        <end position="172"/>
    </location>
</feature>
<feature type="region of interest" description="Trimerization" evidence="3">
    <location>
        <begin position="259"/>
        <end position="309"/>
    </location>
</feature>
<feature type="region of interest" description="Trimerization" evidence="3">
    <location>
        <begin position="383"/>
        <end position="405"/>
    </location>
</feature>
<feature type="short sequence motif" description="basolateral targeting ex vivo" evidence="1">
    <location>
        <begin position="496"/>
        <end position="506"/>
    </location>
</feature>
<feature type="site" description="Involved in the interaction with host LDL receptor" evidence="3">
    <location>
        <position position="63"/>
    </location>
</feature>
<feature type="site" description="pH sensor in the pre-fusion state" evidence="3">
    <location>
        <position position="76"/>
    </location>
</feature>
<feature type="site" description="pH sensor in the pre-fusion state" evidence="3">
    <location>
        <position position="178"/>
    </location>
</feature>
<feature type="site" description="Involved in the interaction with host LDL receptor" evidence="3">
    <location>
        <position position="370"/>
    </location>
</feature>
<feature type="site" description="pH sensor in the pre-fusion state" evidence="3">
    <location>
        <position position="423"/>
    </location>
</feature>
<feature type="lipid moiety-binding region" description="S-palmitoyl cysteine; by host" evidence="5">
    <location>
        <position position="489"/>
    </location>
</feature>
<feature type="glycosylation site" description="N-linked (GlcNAc...) asparagine; by host" evidence="4">
    <location>
        <position position="179"/>
    </location>
</feature>
<feature type="glycosylation site" description="N-linked (GlcNAc...) asparagine; by host" evidence="4">
    <location>
        <position position="336"/>
    </location>
</feature>
<feature type="disulfide bond" evidence="1">
    <location>
        <begin position="40"/>
        <end position="300"/>
    </location>
</feature>
<feature type="disulfide bond" evidence="1">
    <location>
        <begin position="75"/>
        <end position="108"/>
    </location>
</feature>
<feature type="disulfide bond" evidence="1">
    <location>
        <begin position="84"/>
        <end position="130"/>
    </location>
</feature>
<feature type="disulfide bond" evidence="1">
    <location>
        <begin position="169"/>
        <end position="174"/>
    </location>
</feature>
<feature type="disulfide bond" evidence="1">
    <location>
        <begin position="193"/>
        <end position="240"/>
    </location>
</feature>
<feature type="disulfide bond" evidence="1">
    <location>
        <begin position="235"/>
        <end position="269"/>
    </location>
</feature>
<accession>Q8B0H6</accession>
<evidence type="ECO:0000250" key="1"/>
<evidence type="ECO:0000250" key="2">
    <source>
        <dbReference type="UniProtKB" id="P03522"/>
    </source>
</evidence>
<evidence type="ECO:0000250" key="3">
    <source>
        <dbReference type="UniProtKB" id="P0C2X0"/>
    </source>
</evidence>
<evidence type="ECO:0000255" key="4"/>
<evidence type="ECO:0000269" key="5">
    <source>
    </source>
</evidence>
<evidence type="ECO:0000305" key="6"/>
<reference key="1">
    <citation type="journal article" date="2002" name="J. Gen. Virol.">
        <title>Full-length genome analysis of natural isolates of vesicular stomatitis virus (Indiana 1 serotype) from North, Central and South America.</title>
        <authorList>
            <person name="Rodriguez L.L."/>
            <person name="Pauszek S.J."/>
            <person name="Bunch T.A."/>
            <person name="Schumann K.R."/>
        </authorList>
    </citation>
    <scope>NUCLEOTIDE SEQUENCE [GENOMIC RNA]</scope>
    <scope>PALMITOYLATION AT CYS-489</scope>
</reference>
<protein>
    <recommendedName>
        <fullName>Glycoprotein</fullName>
    </recommendedName>
</protein>
<name>GLYCO_VSIVS</name>
<comment type="function">
    <text evidence="2">Attaches the virus to host LDL receptors, inducing clathrin-dependent endocytosis of the virion. In the endosome, the acidic pH induces conformational changes in the glycoprotein trimer, which trigger fusion between virus and endosomal membrane.</text>
</comment>
<comment type="subunit">
    <text evidence="2">Homotrimer. Interacts with host LDL at target cell surface.</text>
</comment>
<comment type="subcellular location">
    <subcellularLocation>
        <location evidence="2">Virion membrane</location>
        <topology evidence="2">Single-pass type I membrane protein</topology>
    </subcellularLocation>
    <subcellularLocation>
        <location evidence="2">Host membrane</location>
        <topology evidence="2">Single-pass type I membrane protein</topology>
    </subcellularLocation>
</comment>
<comment type="PTM">
    <text evidence="2 5">Glycosylated by host (By similarity). Palmitoylated by host (PubMed:12237430).</text>
</comment>
<comment type="biotechnology">
    <text>Used to pseudotype many virus-like particles like lentiviral vector, because of its broad spectrum of host cell tropism. Also used in viral vectors studies in cancer therapy.</text>
</comment>
<comment type="similarity">
    <text evidence="6">Belongs to the vesiculovirus glycoprotein family.</text>
</comment>
<organism>
    <name type="scientific">Vesicular stomatitis Indiana virus (strain 85CLB South America)</name>
    <name type="common">VSIV</name>
    <dbReference type="NCBI Taxonomy" id="434490"/>
    <lineage>
        <taxon>Viruses</taxon>
        <taxon>Riboviria</taxon>
        <taxon>Orthornavirae</taxon>
        <taxon>Negarnaviricota</taxon>
        <taxon>Haploviricotina</taxon>
        <taxon>Monjiviricetes</taxon>
        <taxon>Mononegavirales</taxon>
        <taxon>Rhabdoviridae</taxon>
        <taxon>Alpharhabdovirinae</taxon>
        <taxon>Vesiculovirus</taxon>
        <taxon>Vesiculovirus indiana</taxon>
    </lineage>
</organism>